<accession>Q2RFV8</accession>
<evidence type="ECO:0000255" key="1">
    <source>
        <dbReference type="HAMAP-Rule" id="MF_00501"/>
    </source>
</evidence>
<evidence type="ECO:0000305" key="2"/>
<organism>
    <name type="scientific">Moorella thermoacetica (strain ATCC 39073 / JCM 9320)</name>
    <dbReference type="NCBI Taxonomy" id="264732"/>
    <lineage>
        <taxon>Bacteria</taxon>
        <taxon>Bacillati</taxon>
        <taxon>Bacillota</taxon>
        <taxon>Clostridia</taxon>
        <taxon>Moorellales</taxon>
        <taxon>Moorellaceae</taxon>
        <taxon>Moorella</taxon>
    </lineage>
</organism>
<reference key="1">
    <citation type="journal article" date="2008" name="Environ. Microbiol.">
        <title>The complete genome sequence of Moorella thermoacetica (f. Clostridium thermoaceticum).</title>
        <authorList>
            <person name="Pierce E."/>
            <person name="Xie G."/>
            <person name="Barabote R.D."/>
            <person name="Saunders E."/>
            <person name="Han C.S."/>
            <person name="Detter J.C."/>
            <person name="Richardson P."/>
            <person name="Brettin T.S."/>
            <person name="Das A."/>
            <person name="Ljungdahl L.G."/>
            <person name="Ragsdale S.W."/>
        </authorList>
    </citation>
    <scope>NUCLEOTIDE SEQUENCE [LARGE SCALE GENOMIC DNA]</scope>
    <source>
        <strain>ATCC 39073 / JCM 9320</strain>
    </source>
</reference>
<keyword id="KW-0479">Metal-binding</keyword>
<keyword id="KW-0687">Ribonucleoprotein</keyword>
<keyword id="KW-0689">Ribosomal protein</keyword>
<keyword id="KW-0694">RNA-binding</keyword>
<keyword id="KW-0699">rRNA-binding</keyword>
<keyword id="KW-0862">Zinc</keyword>
<gene>
    <name evidence="1" type="primary">rpmE</name>
    <name type="ordered locus">Moth_2399</name>
</gene>
<sequence length="66" mass="7680">MKPNIHPDYGPARIICACGNVIETRSTKKDIRVEICSQCHPFYTGSRQRVVERGGRIERFRQKYGR</sequence>
<feature type="chain" id="PRO_0000259196" description="Large ribosomal subunit protein bL31">
    <location>
        <begin position="1"/>
        <end position="66"/>
    </location>
</feature>
<feature type="binding site" evidence="1">
    <location>
        <position position="16"/>
    </location>
    <ligand>
        <name>Zn(2+)</name>
        <dbReference type="ChEBI" id="CHEBI:29105"/>
    </ligand>
</feature>
<feature type="binding site" evidence="1">
    <location>
        <position position="18"/>
    </location>
    <ligand>
        <name>Zn(2+)</name>
        <dbReference type="ChEBI" id="CHEBI:29105"/>
    </ligand>
</feature>
<feature type="binding site" evidence="1">
    <location>
        <position position="36"/>
    </location>
    <ligand>
        <name>Zn(2+)</name>
        <dbReference type="ChEBI" id="CHEBI:29105"/>
    </ligand>
</feature>
<feature type="binding site" evidence="1">
    <location>
        <position position="39"/>
    </location>
    <ligand>
        <name>Zn(2+)</name>
        <dbReference type="ChEBI" id="CHEBI:29105"/>
    </ligand>
</feature>
<comment type="function">
    <text evidence="1">Binds the 23S rRNA.</text>
</comment>
<comment type="cofactor">
    <cofactor evidence="1">
        <name>Zn(2+)</name>
        <dbReference type="ChEBI" id="CHEBI:29105"/>
    </cofactor>
    <text evidence="1">Binds 1 zinc ion per subunit.</text>
</comment>
<comment type="subunit">
    <text evidence="1">Part of the 50S ribosomal subunit.</text>
</comment>
<comment type="similarity">
    <text evidence="1">Belongs to the bacterial ribosomal protein bL31 family. Type A subfamily.</text>
</comment>
<dbReference type="EMBL" id="CP000232">
    <property type="protein sequence ID" value="ABC20681.1"/>
    <property type="molecule type" value="Genomic_DNA"/>
</dbReference>
<dbReference type="RefSeq" id="YP_431224.1">
    <property type="nucleotide sequence ID" value="NC_007644.1"/>
</dbReference>
<dbReference type="SMR" id="Q2RFV8"/>
<dbReference type="STRING" id="264732.Moth_2399"/>
<dbReference type="EnsemblBacteria" id="ABC20681">
    <property type="protein sequence ID" value="ABC20681"/>
    <property type="gene ID" value="Moth_2399"/>
</dbReference>
<dbReference type="KEGG" id="mta:Moth_2399"/>
<dbReference type="PATRIC" id="fig|264732.11.peg.2612"/>
<dbReference type="eggNOG" id="COG0254">
    <property type="taxonomic scope" value="Bacteria"/>
</dbReference>
<dbReference type="HOGENOM" id="CLU_114306_4_3_9"/>
<dbReference type="OrthoDB" id="9803251at2"/>
<dbReference type="GO" id="GO:1990904">
    <property type="term" value="C:ribonucleoprotein complex"/>
    <property type="evidence" value="ECO:0007669"/>
    <property type="project" value="UniProtKB-KW"/>
</dbReference>
<dbReference type="GO" id="GO:0005840">
    <property type="term" value="C:ribosome"/>
    <property type="evidence" value="ECO:0007669"/>
    <property type="project" value="UniProtKB-KW"/>
</dbReference>
<dbReference type="GO" id="GO:0046872">
    <property type="term" value="F:metal ion binding"/>
    <property type="evidence" value="ECO:0007669"/>
    <property type="project" value="UniProtKB-KW"/>
</dbReference>
<dbReference type="GO" id="GO:0019843">
    <property type="term" value="F:rRNA binding"/>
    <property type="evidence" value="ECO:0007669"/>
    <property type="project" value="UniProtKB-KW"/>
</dbReference>
<dbReference type="GO" id="GO:0003735">
    <property type="term" value="F:structural constituent of ribosome"/>
    <property type="evidence" value="ECO:0007669"/>
    <property type="project" value="InterPro"/>
</dbReference>
<dbReference type="GO" id="GO:0006412">
    <property type="term" value="P:translation"/>
    <property type="evidence" value="ECO:0007669"/>
    <property type="project" value="UniProtKB-UniRule"/>
</dbReference>
<dbReference type="Gene3D" id="4.10.830.30">
    <property type="entry name" value="Ribosomal protein L31"/>
    <property type="match status" value="1"/>
</dbReference>
<dbReference type="HAMAP" id="MF_00501">
    <property type="entry name" value="Ribosomal_bL31_1"/>
    <property type="match status" value="1"/>
</dbReference>
<dbReference type="InterPro" id="IPR034704">
    <property type="entry name" value="Ribosomal_bL28/bL31-like_sf"/>
</dbReference>
<dbReference type="InterPro" id="IPR002150">
    <property type="entry name" value="Ribosomal_bL31"/>
</dbReference>
<dbReference type="InterPro" id="IPR027491">
    <property type="entry name" value="Ribosomal_bL31_A"/>
</dbReference>
<dbReference type="InterPro" id="IPR042105">
    <property type="entry name" value="Ribosomal_bL31_sf"/>
</dbReference>
<dbReference type="NCBIfam" id="TIGR00105">
    <property type="entry name" value="L31"/>
    <property type="match status" value="1"/>
</dbReference>
<dbReference type="NCBIfam" id="NF000612">
    <property type="entry name" value="PRK00019.1"/>
    <property type="match status" value="1"/>
</dbReference>
<dbReference type="NCBIfam" id="NF001809">
    <property type="entry name" value="PRK00528.1"/>
    <property type="match status" value="1"/>
</dbReference>
<dbReference type="PANTHER" id="PTHR33280">
    <property type="entry name" value="50S RIBOSOMAL PROTEIN L31, CHLOROPLASTIC"/>
    <property type="match status" value="1"/>
</dbReference>
<dbReference type="PANTHER" id="PTHR33280:SF1">
    <property type="entry name" value="LARGE RIBOSOMAL SUBUNIT PROTEIN BL31C"/>
    <property type="match status" value="1"/>
</dbReference>
<dbReference type="Pfam" id="PF01197">
    <property type="entry name" value="Ribosomal_L31"/>
    <property type="match status" value="1"/>
</dbReference>
<dbReference type="PRINTS" id="PR01249">
    <property type="entry name" value="RIBOSOMALL31"/>
</dbReference>
<dbReference type="SUPFAM" id="SSF143800">
    <property type="entry name" value="L28p-like"/>
    <property type="match status" value="1"/>
</dbReference>
<dbReference type="PROSITE" id="PS01143">
    <property type="entry name" value="RIBOSOMAL_L31"/>
    <property type="match status" value="1"/>
</dbReference>
<proteinExistence type="inferred from homology"/>
<name>RL31_MOOTA</name>
<protein>
    <recommendedName>
        <fullName evidence="1">Large ribosomal subunit protein bL31</fullName>
    </recommendedName>
    <alternativeName>
        <fullName evidence="2">50S ribosomal protein L31</fullName>
    </alternativeName>
</protein>